<comment type="function">
    <text evidence="1">Part of a complex that catalyzes the formation of methyl-coenzyme M and tetrahydromethanopterin from coenzyme M and methyl-tetrahydromethanopterin. This is an energy-conserving, sodium-ion translocating step.</text>
</comment>
<comment type="catalytic activity">
    <reaction>
        <text>5-methyl-5,6,7,8-tetrahydromethanopterin + coenzyme M + 2 Na(+)(in) = 5,6,7,8-tetrahydromethanopterin + methyl-coenzyme M + 2 Na(+)(out)</text>
        <dbReference type="Rhea" id="RHEA:53492"/>
        <dbReference type="ChEBI" id="CHEBI:29101"/>
        <dbReference type="ChEBI" id="CHEBI:58103"/>
        <dbReference type="ChEBI" id="CHEBI:58116"/>
        <dbReference type="ChEBI" id="CHEBI:58286"/>
        <dbReference type="ChEBI" id="CHEBI:58319"/>
        <dbReference type="EC" id="7.2.1.4"/>
    </reaction>
</comment>
<comment type="pathway">
    <text>One-carbon metabolism; methanogenesis from CO(2); methyl-coenzyme M from 5,10-methylene-5,6,7,8-tetrahydromethanopterin: step 2/2.</text>
</comment>
<comment type="subunit">
    <text evidence="1">The complex is composed of 8 subunits; MtrA, MtrB, MtrC, MtrD, MtrE, MtrF, MtrG and MtrH.</text>
</comment>
<comment type="subcellular location">
    <subcellularLocation>
        <location evidence="3">Cell membrane</location>
        <topology evidence="3">Multi-pass membrane protein</topology>
    </subcellularLocation>
</comment>
<comment type="similarity">
    <text evidence="3">Belongs to the MtrD family.</text>
</comment>
<protein>
    <recommendedName>
        <fullName>Tetrahydromethanopterin S-methyltransferase subunit D</fullName>
        <ecNumber>7.2.1.4</ecNumber>
    </recommendedName>
    <alternativeName>
        <fullName>N5-methyltetrahydromethanopterin--coenzyme M methyltransferase subunit D</fullName>
    </alternativeName>
</protein>
<feature type="chain" id="PRO_0000147530" description="Tetrahydromethanopterin S-methyltransferase subunit D">
    <location>
        <begin position="1"/>
        <end position="230"/>
    </location>
</feature>
<feature type="transmembrane region" description="Helical" evidence="2">
    <location>
        <begin position="7"/>
        <end position="27"/>
    </location>
</feature>
<feature type="transmembrane region" description="Helical" evidence="2">
    <location>
        <begin position="60"/>
        <end position="80"/>
    </location>
</feature>
<feature type="transmembrane region" description="Helical" evidence="2">
    <location>
        <begin position="88"/>
        <end position="108"/>
    </location>
</feature>
<feature type="transmembrane region" description="Helical" evidence="2">
    <location>
        <begin position="142"/>
        <end position="162"/>
    </location>
</feature>
<feature type="transmembrane region" description="Helical" evidence="2">
    <location>
        <begin position="168"/>
        <end position="188"/>
    </location>
</feature>
<feature type="transmembrane region" description="Helical" evidence="2">
    <location>
        <begin position="210"/>
        <end position="230"/>
    </location>
</feature>
<sequence>MDIVSAIVPLIEMTIAGAIINASVHFIPVGGAPAAMATSTGVGTGTTQLAAGAGFTGLMGAAVMASNVGLSPIGMALIMISGAVSSMIMLGVTMLIGQLIYVFGVGVVPAADKCEIDPITKDPQKPYVTPGTTGHGVPTVCFVSGLIGAALGGIGGALAYIALRKLGLDPGVAGMLAVGFFFINAVLASYNIGGTIEGFHDPKFKKMPNGVIASTVASLLFGIISVLMVL</sequence>
<gene>
    <name type="primary">mtrD</name>
    <name type="ordered locus">MJ0848</name>
</gene>
<evidence type="ECO:0000250" key="1"/>
<evidence type="ECO:0000255" key="2"/>
<evidence type="ECO:0000305" key="3"/>
<proteinExistence type="inferred from homology"/>
<organism>
    <name type="scientific">Methanocaldococcus jannaschii (strain ATCC 43067 / DSM 2661 / JAL-1 / JCM 10045 / NBRC 100440)</name>
    <name type="common">Methanococcus jannaschii</name>
    <dbReference type="NCBI Taxonomy" id="243232"/>
    <lineage>
        <taxon>Archaea</taxon>
        <taxon>Methanobacteriati</taxon>
        <taxon>Methanobacteriota</taxon>
        <taxon>Methanomada group</taxon>
        <taxon>Methanococci</taxon>
        <taxon>Methanococcales</taxon>
        <taxon>Methanocaldococcaceae</taxon>
        <taxon>Methanocaldococcus</taxon>
    </lineage>
</organism>
<keyword id="KW-1003">Cell membrane</keyword>
<keyword id="KW-0472">Membrane</keyword>
<keyword id="KW-0484">Methanogenesis</keyword>
<keyword id="KW-0489">Methyltransferase</keyword>
<keyword id="KW-0554">One-carbon metabolism</keyword>
<keyword id="KW-1185">Reference proteome</keyword>
<keyword id="KW-0808">Transferase</keyword>
<keyword id="KW-1278">Translocase</keyword>
<keyword id="KW-0812">Transmembrane</keyword>
<keyword id="KW-1133">Transmembrane helix</keyword>
<dbReference type="EC" id="7.2.1.4"/>
<dbReference type="EMBL" id="L77117">
    <property type="protein sequence ID" value="AAB98853.1"/>
    <property type="molecule type" value="Genomic_DNA"/>
</dbReference>
<dbReference type="PIR" id="H64405">
    <property type="entry name" value="H64405"/>
</dbReference>
<dbReference type="RefSeq" id="WP_010870362.1">
    <property type="nucleotide sequence ID" value="NC_000909.1"/>
</dbReference>
<dbReference type="SMR" id="Q58258"/>
<dbReference type="FunCoup" id="Q58258">
    <property type="interactions" value="96"/>
</dbReference>
<dbReference type="STRING" id="243232.MJ_0848"/>
<dbReference type="PaxDb" id="243232-MJ_0848"/>
<dbReference type="EnsemblBacteria" id="AAB98853">
    <property type="protein sequence ID" value="AAB98853"/>
    <property type="gene ID" value="MJ_0848"/>
</dbReference>
<dbReference type="GeneID" id="1451736"/>
<dbReference type="KEGG" id="mja:MJ_0848"/>
<dbReference type="eggNOG" id="arCOG04869">
    <property type="taxonomic scope" value="Archaea"/>
</dbReference>
<dbReference type="HOGENOM" id="CLU_1109510_0_0_2"/>
<dbReference type="InParanoid" id="Q58258"/>
<dbReference type="OrthoDB" id="147994at2157"/>
<dbReference type="PhylomeDB" id="Q58258"/>
<dbReference type="UniPathway" id="UPA00640">
    <property type="reaction ID" value="UER00698"/>
</dbReference>
<dbReference type="Proteomes" id="UP000000805">
    <property type="component" value="Chromosome"/>
</dbReference>
<dbReference type="GO" id="GO:0005737">
    <property type="term" value="C:cytoplasm"/>
    <property type="evidence" value="ECO:0007669"/>
    <property type="project" value="InterPro"/>
</dbReference>
<dbReference type="GO" id="GO:0005886">
    <property type="term" value="C:plasma membrane"/>
    <property type="evidence" value="ECO:0007669"/>
    <property type="project" value="UniProtKB-SubCell"/>
</dbReference>
<dbReference type="GO" id="GO:0012506">
    <property type="term" value="C:vesicle membrane"/>
    <property type="evidence" value="ECO:0007669"/>
    <property type="project" value="InterPro"/>
</dbReference>
<dbReference type="GO" id="GO:0030269">
    <property type="term" value="F:tetrahydromethanopterin S-methyltransferase activity"/>
    <property type="evidence" value="ECO:0007669"/>
    <property type="project" value="UniProtKB-UniRule"/>
</dbReference>
<dbReference type="GO" id="GO:0019386">
    <property type="term" value="P:methanogenesis, from carbon dioxide"/>
    <property type="evidence" value="ECO:0007669"/>
    <property type="project" value="UniProtKB-UniRule"/>
</dbReference>
<dbReference type="GO" id="GO:0032259">
    <property type="term" value="P:methylation"/>
    <property type="evidence" value="ECO:0007669"/>
    <property type="project" value="UniProtKB-KW"/>
</dbReference>
<dbReference type="GO" id="GO:0006730">
    <property type="term" value="P:one-carbon metabolic process"/>
    <property type="evidence" value="ECO:0007669"/>
    <property type="project" value="UniProtKB-UniRule"/>
</dbReference>
<dbReference type="HAMAP" id="MF_01097">
    <property type="entry name" value="MtrD"/>
    <property type="match status" value="1"/>
</dbReference>
<dbReference type="InterPro" id="IPR005779">
    <property type="entry name" value="MeTrfase_D"/>
</dbReference>
<dbReference type="NCBIfam" id="TIGR01112">
    <property type="entry name" value="mtrD"/>
    <property type="match status" value="1"/>
</dbReference>
<dbReference type="Pfam" id="PF04207">
    <property type="entry name" value="MtrD"/>
    <property type="match status" value="1"/>
</dbReference>
<dbReference type="PIRSF" id="PIRSF016552">
    <property type="entry name" value="MtrD"/>
    <property type="match status" value="1"/>
</dbReference>
<accession>Q58258</accession>
<reference key="1">
    <citation type="journal article" date="1996" name="Science">
        <title>Complete genome sequence of the methanogenic archaeon, Methanococcus jannaschii.</title>
        <authorList>
            <person name="Bult C.J."/>
            <person name="White O."/>
            <person name="Olsen G.J."/>
            <person name="Zhou L."/>
            <person name="Fleischmann R.D."/>
            <person name="Sutton G.G."/>
            <person name="Blake J.A."/>
            <person name="FitzGerald L.M."/>
            <person name="Clayton R.A."/>
            <person name="Gocayne J.D."/>
            <person name="Kerlavage A.R."/>
            <person name="Dougherty B.A."/>
            <person name="Tomb J.-F."/>
            <person name="Adams M.D."/>
            <person name="Reich C.I."/>
            <person name="Overbeek R."/>
            <person name="Kirkness E.F."/>
            <person name="Weinstock K.G."/>
            <person name="Merrick J.M."/>
            <person name="Glodek A."/>
            <person name="Scott J.L."/>
            <person name="Geoghagen N.S.M."/>
            <person name="Weidman J.F."/>
            <person name="Fuhrmann J.L."/>
            <person name="Nguyen D."/>
            <person name="Utterback T.R."/>
            <person name="Kelley J.M."/>
            <person name="Peterson J.D."/>
            <person name="Sadow P.W."/>
            <person name="Hanna M.C."/>
            <person name="Cotton M.D."/>
            <person name="Roberts K.M."/>
            <person name="Hurst M.A."/>
            <person name="Kaine B.P."/>
            <person name="Borodovsky M."/>
            <person name="Klenk H.-P."/>
            <person name="Fraser C.M."/>
            <person name="Smith H.O."/>
            <person name="Woese C.R."/>
            <person name="Venter J.C."/>
        </authorList>
    </citation>
    <scope>NUCLEOTIDE SEQUENCE [LARGE SCALE GENOMIC DNA]</scope>
    <source>
        <strain>ATCC 43067 / DSM 2661 / JAL-1 / JCM 10045 / NBRC 100440</strain>
    </source>
</reference>
<name>MTRD_METJA</name>